<name>RCEH_CERSP</name>
<keyword id="KW-0002">3D-structure</keyword>
<keyword id="KW-0076">Bacteriochlorophyll</keyword>
<keyword id="KW-0148">Chlorophyll</keyword>
<keyword id="KW-0157">Chromophore</keyword>
<keyword id="KW-0249">Electron transport</keyword>
<keyword id="KW-0472">Membrane</keyword>
<keyword id="KW-0602">Photosynthesis</keyword>
<keyword id="KW-0674">Reaction center</keyword>
<keyword id="KW-0812">Transmembrane</keyword>
<keyword id="KW-1133">Transmembrane helix</keyword>
<keyword id="KW-0813">Transport</keyword>
<reference key="1">
    <citation type="journal article" date="1986" name="Proteins">
        <title>Primary structure of the reaction center from Rhodopseudomonas sphaeroides.</title>
        <authorList>
            <person name="Williams J.C."/>
            <person name="Steiner L.A."/>
            <person name="Feher G."/>
        </authorList>
    </citation>
    <scope>NUCLEOTIDE SEQUENCE [GENOMIC DNA]</scope>
</reference>
<reference key="2">
    <citation type="submission" date="1991-10" db="EMBL/GenBank/DDBJ databases">
        <authorList>
            <person name="Picaud M."/>
        </authorList>
    </citation>
    <scope>NUCLEOTIDE SEQUENCE [GENOMIC DNA]</scope>
    <source>
        <strain>Y</strain>
    </source>
</reference>
<reference key="3">
    <citation type="journal article" date="1991" name="Biochemistry">
        <title>Structure of the membrane-bound protein photosynthetic reaction center from Rhodobacter sphaeroides.</title>
        <authorList>
            <person name="Chang C.-H."/>
            <person name="El-Kabbani O."/>
            <person name="Tiede D."/>
            <person name="Norris J."/>
            <person name="Schiffer M."/>
        </authorList>
    </citation>
    <scope>X-RAY CRYSTALLOGRAPHY (3.1 ANGSTROMS)</scope>
</reference>
<reference key="4">
    <citation type="journal article" date="1988" name="Proc. Natl. Acad. Sci. U.S.A.">
        <title>Structure of the reaction center from Rhodobacter sphaeroides R-26: protein-cofactor (quinones and Fe2+) interactions.</title>
        <authorList>
            <person name="Allen J.P."/>
            <person name="Feher G."/>
            <person name="Yeates T.O."/>
            <person name="Komiya H."/>
            <person name="Rees D.C."/>
        </authorList>
    </citation>
    <scope>X-RAY CRYSTALLOGRAPHY (2.8 ANGSTROMS)</scope>
    <source>
        <strain>R-26</strain>
    </source>
</reference>
<reference key="5">
    <citation type="journal article" date="1987" name="Proc. Natl. Acad. Sci. U.S.A.">
        <title>Structure of the reaction center from Rhodobacter sphaeroides R-26: the protein subunits.</title>
        <authorList>
            <person name="Allen J.P."/>
            <person name="Feher G."/>
            <person name="Yeates T.O."/>
            <person name="Komiya H."/>
            <person name="Rees D.C."/>
        </authorList>
    </citation>
    <scope>X-RAY CRYSTALLOGRAPHY (2.8 ANGSTROMS)</scope>
    <source>
        <strain>R-26</strain>
    </source>
</reference>
<reference key="6">
    <citation type="journal article" date="1998" name="Biochemistry">
        <title>Structural studies of wild-type and mutant reaction centers from an antenna-deficient strain of Rhodobacter sphaeroides: monitoring the optical properties of the complex from bacterial cell to crystal.</title>
        <authorList>
            <person name="McAuley-Hecht K.E."/>
            <person name="Fyfe P.K."/>
            <person name="Ridge J.P."/>
            <person name="Prince S.M."/>
            <person name="Hunter C.N."/>
            <person name="Isaacs N.W."/>
            <person name="Cogdell R.J."/>
            <person name="Jones M.R."/>
        </authorList>
    </citation>
    <scope>X-RAY CRYSTALLOGRAPHY (2.55 ANGSTROMS)</scope>
</reference>
<comment type="function">
    <text>The reaction center is a membrane-bound complex that mediates the initial photochemical event in the electron transfer process of photosynthesis.</text>
</comment>
<comment type="cofactor">
    <cofactor>
        <name>a bacteriochlorophyll</name>
        <dbReference type="ChEBI" id="CHEBI:38201"/>
    </cofactor>
    <text>Binds 4 bacteriochlorophylls per trimer.</text>
</comment>
<comment type="cofactor">
    <cofactor>
        <name>a bacteriopheophytin</name>
        <dbReference type="ChEBI" id="CHEBI:60411"/>
    </cofactor>
    <text>Binds 2 bacteriopheophytins per trimer.</text>
</comment>
<comment type="cofactor">
    <cofactor>
        <name>Fe cation</name>
        <dbReference type="ChEBI" id="CHEBI:24875"/>
    </cofactor>
    <text>Binds 1 Fe cation per trimer.</text>
</comment>
<comment type="cofactor">
    <cofactor>
        <name>Mg(2+)</name>
        <dbReference type="ChEBI" id="CHEBI:18420"/>
    </cofactor>
    <text>Binds 4 Mg(2+) ions per trimer.</text>
</comment>
<comment type="cofactor">
    <cofactor>
        <name>a ubiquinone</name>
        <dbReference type="ChEBI" id="CHEBI:16389"/>
    </cofactor>
    <text>Binds 2 ubiquinone per trimer.</text>
</comment>
<comment type="subunit">
    <text>Heterotrimer composed of subunits L, M, and H.</text>
</comment>
<comment type="subcellular location">
    <subcellularLocation>
        <location>Cellular chromatophore membrane</location>
        <topology>Single-pass membrane protein</topology>
    </subcellularLocation>
</comment>
<comment type="similarity">
    <text evidence="1">Belongs to the reaction center PuhA family.</text>
</comment>
<gene>
    <name type="primary">puhA</name>
</gene>
<sequence length="260" mass="28035">MVGVTAFGNFDLASLAIYSFWIFLAGLIYYLQTENMREGYPLENEDGTPAANQGPFPLPKPKTFILPHGRGTLTVPGPESEDRPIALARTAVSEGFPHAPTGDPMKDGVGPASWVARRDLPELDGHGHNKIKPMKAAAGFHVSAGKNPIGLPVRGCDLEIAGKVVDIWVDIPEQMARFLEVELKDGSTRLLPMQMVKVQSNRVHVNALSSDLFAGIPTIKSPTEVTLLEEDKICGYVAGGLMYAAPKRKSVVAAMLAEYA</sequence>
<protein>
    <recommendedName>
        <fullName>Reaction center protein H chain</fullName>
    </recommendedName>
    <alternativeName>
        <fullName>Photosynthetic reaction center H subunit</fullName>
    </alternativeName>
</protein>
<feature type="chain" id="PRO_0000090394" description="Reaction center protein H chain">
    <location>
        <begin position="1"/>
        <end position="260"/>
    </location>
</feature>
<feature type="topological domain" description="Periplasmic">
    <location>
        <begin position="1"/>
        <end position="11"/>
    </location>
</feature>
<feature type="transmembrane region" description="Helical">
    <location>
        <begin position="12"/>
        <end position="31"/>
    </location>
</feature>
<feature type="topological domain" description="Cytoplasmic">
    <location>
        <begin position="32"/>
        <end position="260"/>
    </location>
</feature>
<feature type="turn" evidence="7">
    <location>
        <begin position="6"/>
        <end position="8"/>
    </location>
</feature>
<feature type="helix" evidence="13">
    <location>
        <begin position="12"/>
        <end position="34"/>
    </location>
</feature>
<feature type="strand" evidence="13">
    <location>
        <begin position="37"/>
        <end position="39"/>
    </location>
</feature>
<feature type="strand" evidence="10">
    <location>
        <begin position="40"/>
        <end position="43"/>
    </location>
</feature>
<feature type="strand" evidence="13">
    <location>
        <begin position="47"/>
        <end position="49"/>
    </location>
</feature>
<feature type="strand" evidence="5">
    <location>
        <begin position="50"/>
        <end position="52"/>
    </location>
</feature>
<feature type="strand" evidence="4">
    <location>
        <begin position="56"/>
        <end position="58"/>
    </location>
</feature>
<feature type="strand" evidence="13">
    <location>
        <begin position="62"/>
        <end position="66"/>
    </location>
</feature>
<feature type="turn" evidence="13">
    <location>
        <begin position="67"/>
        <end position="70"/>
    </location>
</feature>
<feature type="strand" evidence="13">
    <location>
        <begin position="71"/>
        <end position="76"/>
    </location>
</feature>
<feature type="strand" evidence="13">
    <location>
        <begin position="87"/>
        <end position="90"/>
    </location>
</feature>
<feature type="strand" evidence="12">
    <location>
        <begin position="92"/>
        <end position="96"/>
    </location>
</feature>
<feature type="strand" evidence="13">
    <location>
        <begin position="98"/>
        <end position="102"/>
    </location>
</feature>
<feature type="helix" evidence="13">
    <location>
        <begin position="104"/>
        <end position="107"/>
    </location>
</feature>
<feature type="helix" evidence="13">
    <location>
        <begin position="110"/>
        <end position="112"/>
    </location>
</feature>
<feature type="strand" evidence="13">
    <location>
        <begin position="127"/>
        <end position="133"/>
    </location>
</feature>
<feature type="helix" evidence="13">
    <location>
        <begin position="134"/>
        <end position="136"/>
    </location>
</feature>
<feature type="strand" evidence="3">
    <location>
        <begin position="137"/>
        <end position="139"/>
    </location>
</feature>
<feature type="strand" evidence="13">
    <location>
        <begin position="141"/>
        <end position="145"/>
    </location>
</feature>
<feature type="helix" evidence="5">
    <location>
        <begin position="148"/>
        <end position="150"/>
    </location>
</feature>
<feature type="strand" evidence="13">
    <location>
        <begin position="152"/>
        <end position="155"/>
    </location>
</feature>
<feature type="strand" evidence="2">
    <location>
        <begin position="156"/>
        <end position="158"/>
    </location>
</feature>
<feature type="strand" evidence="13">
    <location>
        <begin position="160"/>
        <end position="170"/>
    </location>
</feature>
<feature type="turn" evidence="13">
    <location>
        <begin position="171"/>
        <end position="174"/>
    </location>
</feature>
<feature type="strand" evidence="13">
    <location>
        <begin position="175"/>
        <end position="182"/>
    </location>
</feature>
<feature type="strand" evidence="10">
    <location>
        <begin position="184"/>
        <end position="186"/>
    </location>
</feature>
<feature type="strand" evidence="13">
    <location>
        <begin position="188"/>
        <end position="192"/>
    </location>
</feature>
<feature type="helix" evidence="13">
    <location>
        <begin position="193"/>
        <end position="195"/>
    </location>
</feature>
<feature type="strand" evidence="6">
    <location>
        <begin position="197"/>
        <end position="199"/>
    </location>
</feature>
<feature type="strand" evidence="13">
    <location>
        <begin position="203"/>
        <end position="205"/>
    </location>
</feature>
<feature type="strand" evidence="12">
    <location>
        <begin position="206"/>
        <end position="208"/>
    </location>
</feature>
<feature type="helix" evidence="13">
    <location>
        <begin position="210"/>
        <end position="212"/>
    </location>
</feature>
<feature type="turn" evidence="9">
    <location>
        <begin position="213"/>
        <end position="215"/>
    </location>
</feature>
<feature type="strand" evidence="11">
    <location>
        <begin position="220"/>
        <end position="223"/>
    </location>
</feature>
<feature type="helix" evidence="13">
    <location>
        <begin position="227"/>
        <end position="243"/>
    </location>
</feature>
<feature type="helix" evidence="13">
    <location>
        <begin position="245"/>
        <end position="247"/>
    </location>
</feature>
<feature type="strand" evidence="8">
    <location>
        <begin position="248"/>
        <end position="250"/>
    </location>
</feature>
<feature type="helix" evidence="7">
    <location>
        <begin position="251"/>
        <end position="254"/>
    </location>
</feature>
<dbReference type="EMBL" id="M18412">
    <property type="protein sequence ID" value="AAA26176.1"/>
    <property type="molecule type" value="Genomic_DNA"/>
</dbReference>
<dbReference type="EMBL" id="X63378">
    <property type="protein sequence ID" value="CAA44976.1"/>
    <property type="molecule type" value="Genomic_DNA"/>
</dbReference>
<dbReference type="PIR" id="A26538">
    <property type="entry name" value="A26538"/>
</dbReference>
<dbReference type="RefSeq" id="WP_002720455.1">
    <property type="nucleotide sequence ID" value="NZ_WTFI01000017.1"/>
</dbReference>
<dbReference type="PDB" id="1AIG">
    <property type="method" value="X-ray"/>
    <property type="resolution" value="2.60 A"/>
    <property type="chains" value="H/P=1-260"/>
</dbReference>
<dbReference type="PDB" id="1AIJ">
    <property type="method" value="X-ray"/>
    <property type="resolution" value="2.20 A"/>
    <property type="chains" value="H/T=1-260"/>
</dbReference>
<dbReference type="PDB" id="1DS8">
    <property type="method" value="X-ray"/>
    <property type="resolution" value="2.50 A"/>
    <property type="chains" value="H/T=1-260"/>
</dbReference>
<dbReference type="PDB" id="1DV3">
    <property type="method" value="X-ray"/>
    <property type="resolution" value="2.50 A"/>
    <property type="chains" value="H/T=1-260"/>
</dbReference>
<dbReference type="PDB" id="1DV6">
    <property type="method" value="X-ray"/>
    <property type="resolution" value="2.50 A"/>
    <property type="chains" value="H/T=1-260"/>
</dbReference>
<dbReference type="PDB" id="1E14">
    <property type="method" value="X-ray"/>
    <property type="resolution" value="2.70 A"/>
    <property type="chains" value="H=1-260"/>
</dbReference>
<dbReference type="PDB" id="1E6D">
    <property type="method" value="X-ray"/>
    <property type="resolution" value="2.30 A"/>
    <property type="chains" value="H=1-260"/>
</dbReference>
<dbReference type="PDB" id="1F6N">
    <property type="method" value="X-ray"/>
    <property type="resolution" value="2.80 A"/>
    <property type="chains" value="H=1-260"/>
</dbReference>
<dbReference type="PDB" id="1FNP">
    <property type="method" value="X-ray"/>
    <property type="resolution" value="2.60 A"/>
    <property type="chains" value="H=1-260"/>
</dbReference>
<dbReference type="PDB" id="1FNQ">
    <property type="method" value="X-ray"/>
    <property type="resolution" value="2.60 A"/>
    <property type="chains" value="H=1-260"/>
</dbReference>
<dbReference type="PDB" id="1JGW">
    <property type="method" value="X-ray"/>
    <property type="resolution" value="2.80 A"/>
    <property type="chains" value="H=1-260"/>
</dbReference>
<dbReference type="PDB" id="1JGX">
    <property type="method" value="X-ray"/>
    <property type="resolution" value="3.01 A"/>
    <property type="chains" value="H=1-260"/>
</dbReference>
<dbReference type="PDB" id="1JGY">
    <property type="method" value="X-ray"/>
    <property type="resolution" value="2.70 A"/>
    <property type="chains" value="H=1-260"/>
</dbReference>
<dbReference type="PDB" id="1JGZ">
    <property type="method" value="X-ray"/>
    <property type="resolution" value="2.70 A"/>
    <property type="chains" value="H=1-260"/>
</dbReference>
<dbReference type="PDB" id="1JH0">
    <property type="method" value="X-ray"/>
    <property type="resolution" value="3.50 A"/>
    <property type="chains" value="H=1-260"/>
</dbReference>
<dbReference type="PDB" id="1K6L">
    <property type="method" value="X-ray"/>
    <property type="resolution" value="3.10 A"/>
    <property type="chains" value="H=1-260"/>
</dbReference>
<dbReference type="PDB" id="1K6N">
    <property type="method" value="X-ray"/>
    <property type="resolution" value="3.10 A"/>
    <property type="chains" value="H=1-260"/>
</dbReference>
<dbReference type="PDB" id="1KBY">
    <property type="method" value="X-ray"/>
    <property type="resolution" value="2.50 A"/>
    <property type="chains" value="H=1-260"/>
</dbReference>
<dbReference type="PDB" id="1L9B">
    <property type="method" value="X-ray"/>
    <property type="resolution" value="2.40 A"/>
    <property type="chains" value="H=1-260"/>
</dbReference>
<dbReference type="PDB" id="1L9J">
    <property type="method" value="X-ray"/>
    <property type="resolution" value="3.25 A"/>
    <property type="chains" value="H/T=1-260"/>
</dbReference>
<dbReference type="PDB" id="1M3X">
    <property type="method" value="X-ray"/>
    <property type="resolution" value="2.55 A"/>
    <property type="chains" value="H=1-260"/>
</dbReference>
<dbReference type="PDB" id="1MPS">
    <property type="method" value="X-ray"/>
    <property type="resolution" value="2.55 A"/>
    <property type="chains" value="H=1-260"/>
</dbReference>
<dbReference type="PDB" id="1OGV">
    <property type="method" value="X-ray"/>
    <property type="resolution" value="2.35 A"/>
    <property type="chains" value="H=11-260"/>
</dbReference>
<dbReference type="PDB" id="1PCR">
    <property type="method" value="X-ray"/>
    <property type="resolution" value="2.65 A"/>
    <property type="chains" value="H=1-260"/>
</dbReference>
<dbReference type="PDB" id="1PSS">
    <property type="method" value="X-ray"/>
    <property type="resolution" value="3.00 A"/>
    <property type="chains" value="H=12-248"/>
</dbReference>
<dbReference type="PDB" id="1PST">
    <property type="method" value="X-ray"/>
    <property type="resolution" value="3.00 A"/>
    <property type="chains" value="H=12-248"/>
</dbReference>
<dbReference type="PDB" id="1QOV">
    <property type="method" value="X-ray"/>
    <property type="resolution" value="2.10 A"/>
    <property type="chains" value="H=1-260"/>
</dbReference>
<dbReference type="PDB" id="1RG5">
    <property type="method" value="X-ray"/>
    <property type="resolution" value="2.50 A"/>
    <property type="chains" value="H=1-260"/>
</dbReference>
<dbReference type="PDB" id="1RGN">
    <property type="method" value="X-ray"/>
    <property type="resolution" value="2.80 A"/>
    <property type="chains" value="H=1-260"/>
</dbReference>
<dbReference type="PDB" id="1RQK">
    <property type="method" value="X-ray"/>
    <property type="resolution" value="2.70 A"/>
    <property type="chains" value="H=1-260"/>
</dbReference>
<dbReference type="PDB" id="1RVJ">
    <property type="method" value="X-ray"/>
    <property type="resolution" value="2.75 A"/>
    <property type="chains" value="H=1-260"/>
</dbReference>
<dbReference type="PDB" id="1RY5">
    <property type="method" value="X-ray"/>
    <property type="resolution" value="2.10 A"/>
    <property type="chains" value="H=1-260"/>
</dbReference>
<dbReference type="PDB" id="1RZH">
    <property type="method" value="X-ray"/>
    <property type="resolution" value="1.80 A"/>
    <property type="chains" value="H=1-260"/>
</dbReference>
<dbReference type="PDB" id="1RZZ">
    <property type="method" value="X-ray"/>
    <property type="resolution" value="2.40 A"/>
    <property type="chains" value="H/T=1-260"/>
</dbReference>
<dbReference type="PDB" id="1S00">
    <property type="method" value="X-ray"/>
    <property type="resolution" value="2.60 A"/>
    <property type="chains" value="H/T=1-260"/>
</dbReference>
<dbReference type="PDB" id="1UMX">
    <property type="method" value="X-ray"/>
    <property type="resolution" value="2.80 A"/>
    <property type="chains" value="H=1-260"/>
</dbReference>
<dbReference type="PDB" id="1YF6">
    <property type="method" value="X-ray"/>
    <property type="resolution" value="2.25 A"/>
    <property type="chains" value="H=1-260"/>
</dbReference>
<dbReference type="PDB" id="1YST">
    <property type="method" value="X-ray"/>
    <property type="resolution" value="3.00 A"/>
    <property type="chains" value="H=1-260"/>
</dbReference>
<dbReference type="PDB" id="1Z9J">
    <property type="method" value="X-ray"/>
    <property type="resolution" value="4.50 A"/>
    <property type="chains" value="C=1-260"/>
</dbReference>
<dbReference type="PDB" id="1Z9K">
    <property type="method" value="X-ray"/>
    <property type="resolution" value="4.60 A"/>
    <property type="chains" value="C=1-260"/>
</dbReference>
<dbReference type="PDB" id="2BNP">
    <property type="method" value="X-ray"/>
    <property type="resolution" value="2.70 A"/>
    <property type="chains" value="C=1-260"/>
</dbReference>
<dbReference type="PDB" id="2BNS">
    <property type="method" value="X-ray"/>
    <property type="resolution" value="2.50 A"/>
    <property type="chains" value="C=1-260"/>
</dbReference>
<dbReference type="PDB" id="2BOZ">
    <property type="method" value="X-ray"/>
    <property type="resolution" value="2.40 A"/>
    <property type="chains" value="H=1-260"/>
</dbReference>
<dbReference type="PDB" id="2GMR">
    <property type="method" value="X-ray"/>
    <property type="resolution" value="2.50 A"/>
    <property type="chains" value="H=1-260"/>
</dbReference>
<dbReference type="PDB" id="2GNU">
    <property type="method" value="X-ray"/>
    <property type="resolution" value="2.20 A"/>
    <property type="chains" value="H=11-245"/>
</dbReference>
<dbReference type="PDB" id="2HG3">
    <property type="method" value="X-ray"/>
    <property type="resolution" value="2.70 A"/>
    <property type="chains" value="H=1-260"/>
</dbReference>
<dbReference type="PDB" id="2HG9">
    <property type="method" value="X-ray"/>
    <property type="resolution" value="2.45 A"/>
    <property type="chains" value="H=1-260"/>
</dbReference>
<dbReference type="PDB" id="2HH1">
    <property type="method" value="X-ray"/>
    <property type="resolution" value="2.55 A"/>
    <property type="chains" value="H=1-260"/>
</dbReference>
<dbReference type="PDB" id="2HHK">
    <property type="method" value="X-ray"/>
    <property type="resolution" value="2.50 A"/>
    <property type="chains" value="H=1-260"/>
</dbReference>
<dbReference type="PDB" id="2HIT">
    <property type="method" value="X-ray"/>
    <property type="resolution" value="2.75 A"/>
    <property type="chains" value="H=1-260"/>
</dbReference>
<dbReference type="PDB" id="2HJ6">
    <property type="method" value="X-ray"/>
    <property type="resolution" value="3.00 A"/>
    <property type="chains" value="H=1-260"/>
</dbReference>
<dbReference type="PDB" id="2J8C">
    <property type="method" value="X-ray"/>
    <property type="resolution" value="1.87 A"/>
    <property type="chains" value="H=1-260"/>
</dbReference>
<dbReference type="PDB" id="2J8D">
    <property type="method" value="X-ray"/>
    <property type="resolution" value="2.07 A"/>
    <property type="chains" value="H=1-260"/>
</dbReference>
<dbReference type="PDB" id="2JIY">
    <property type="method" value="X-ray"/>
    <property type="resolution" value="2.20 A"/>
    <property type="chains" value="H=1-260"/>
</dbReference>
<dbReference type="PDB" id="2JJ0">
    <property type="method" value="X-ray"/>
    <property type="resolution" value="2.80 A"/>
    <property type="chains" value="H=1-260"/>
</dbReference>
<dbReference type="PDB" id="2RCR">
    <property type="method" value="X-ray"/>
    <property type="resolution" value="3.10 A"/>
    <property type="chains" value="H=1-260"/>
</dbReference>
<dbReference type="PDB" id="2UWS">
    <property type="method" value="X-ray"/>
    <property type="resolution" value="2.90 A"/>
    <property type="chains" value="H=1-260"/>
</dbReference>
<dbReference type="PDB" id="2UWT">
    <property type="method" value="X-ray"/>
    <property type="resolution" value="2.50 A"/>
    <property type="chains" value="H=1-260"/>
</dbReference>
<dbReference type="PDB" id="2UWU">
    <property type="method" value="X-ray"/>
    <property type="resolution" value="2.04 A"/>
    <property type="chains" value="H=1-260"/>
</dbReference>
<dbReference type="PDB" id="2UWV">
    <property type="method" value="X-ray"/>
    <property type="resolution" value="2.13 A"/>
    <property type="chains" value="H=1-260"/>
</dbReference>
<dbReference type="PDB" id="2UWW">
    <property type="method" value="X-ray"/>
    <property type="resolution" value="2.05 A"/>
    <property type="chains" value="H=1-260"/>
</dbReference>
<dbReference type="PDB" id="2UX3">
    <property type="method" value="X-ray"/>
    <property type="resolution" value="2.50 A"/>
    <property type="chains" value="H=1-260"/>
</dbReference>
<dbReference type="PDB" id="2UX4">
    <property type="method" value="X-ray"/>
    <property type="resolution" value="2.51 A"/>
    <property type="chains" value="H=1-260"/>
</dbReference>
<dbReference type="PDB" id="2UX5">
    <property type="method" value="X-ray"/>
    <property type="resolution" value="2.21 A"/>
    <property type="chains" value="H=1-260"/>
</dbReference>
<dbReference type="PDB" id="2UXJ">
    <property type="method" value="X-ray"/>
    <property type="resolution" value="2.25 A"/>
    <property type="chains" value="H=1-260"/>
</dbReference>
<dbReference type="PDB" id="2UXK">
    <property type="method" value="X-ray"/>
    <property type="resolution" value="2.31 A"/>
    <property type="chains" value="H=1-260"/>
</dbReference>
<dbReference type="PDB" id="2UXL">
    <property type="method" value="X-ray"/>
    <property type="resolution" value="2.88 A"/>
    <property type="chains" value="H=1-260"/>
</dbReference>
<dbReference type="PDB" id="2UXM">
    <property type="method" value="X-ray"/>
    <property type="resolution" value="2.70 A"/>
    <property type="chains" value="H=1-260"/>
</dbReference>
<dbReference type="PDB" id="3DSY">
    <property type="method" value="X-ray"/>
    <property type="resolution" value="3.00 A"/>
    <property type="chains" value="H=1-260"/>
</dbReference>
<dbReference type="PDB" id="3DTA">
    <property type="method" value="X-ray"/>
    <property type="resolution" value="3.20 A"/>
    <property type="chains" value="H=1-260"/>
</dbReference>
<dbReference type="PDB" id="3DTR">
    <property type="method" value="X-ray"/>
    <property type="resolution" value="3.10 A"/>
    <property type="chains" value="H=1-260"/>
</dbReference>
<dbReference type="PDB" id="3DTS">
    <property type="method" value="X-ray"/>
    <property type="resolution" value="3.10 A"/>
    <property type="chains" value="H=1-260"/>
</dbReference>
<dbReference type="PDB" id="3DU2">
    <property type="method" value="X-ray"/>
    <property type="resolution" value="3.10 A"/>
    <property type="chains" value="H=1-260"/>
</dbReference>
<dbReference type="PDB" id="3DU3">
    <property type="method" value="X-ray"/>
    <property type="resolution" value="2.80 A"/>
    <property type="chains" value="H=1-260"/>
</dbReference>
<dbReference type="PDB" id="3DUQ">
    <property type="method" value="X-ray"/>
    <property type="resolution" value="2.70 A"/>
    <property type="chains" value="H=1-260"/>
</dbReference>
<dbReference type="PDB" id="3I4D">
    <property type="method" value="X-ray"/>
    <property type="resolution" value="2.01 A"/>
    <property type="chains" value="H=1-260"/>
</dbReference>
<dbReference type="PDB" id="3V3Y">
    <property type="method" value="X-ray"/>
    <property type="resolution" value="2.80 A"/>
    <property type="chains" value="H=10-250"/>
</dbReference>
<dbReference type="PDB" id="3V3Z">
    <property type="method" value="X-ray"/>
    <property type="resolution" value="2.90 A"/>
    <property type="chains" value="H=10-250"/>
</dbReference>
<dbReference type="PDB" id="3ZUM">
    <property type="method" value="X-ray"/>
    <property type="resolution" value="2.50 A"/>
    <property type="chains" value="H=1-260"/>
</dbReference>
<dbReference type="PDB" id="3ZUW">
    <property type="method" value="X-ray"/>
    <property type="resolution" value="2.31 A"/>
    <property type="chains" value="H=1-260"/>
</dbReference>
<dbReference type="PDB" id="4H99">
    <property type="method" value="X-ray"/>
    <property type="resolution" value="2.97 A"/>
    <property type="chains" value="H=11-250"/>
</dbReference>
<dbReference type="PDB" id="4H9L">
    <property type="method" value="X-ray"/>
    <property type="resolution" value="2.77 A"/>
    <property type="chains" value="H=11-250"/>
</dbReference>
<dbReference type="PDB" id="4HBH">
    <property type="method" value="X-ray"/>
    <property type="resolution" value="2.93 A"/>
    <property type="chains" value="H=11-250"/>
</dbReference>
<dbReference type="PDB" id="4HBJ">
    <property type="method" value="X-ray"/>
    <property type="resolution" value="2.74 A"/>
    <property type="chains" value="H=11-250"/>
</dbReference>
<dbReference type="PDB" id="4IN7">
    <property type="method" value="X-ray"/>
    <property type="resolution" value="2.85 A"/>
    <property type="chains" value="H=1-250"/>
</dbReference>
<dbReference type="PDB" id="4LWY">
    <property type="method" value="X-ray"/>
    <property type="resolution" value="2.90 A"/>
    <property type="chains" value="H=1-260"/>
</dbReference>
<dbReference type="PDB" id="4N7K">
    <property type="method" value="X-ray"/>
    <property type="resolution" value="2.85 A"/>
    <property type="chains" value="H=11-251"/>
</dbReference>
<dbReference type="PDB" id="4RCR">
    <property type="method" value="X-ray"/>
    <property type="resolution" value="2.80 A"/>
    <property type="chains" value="H=1-260"/>
</dbReference>
<dbReference type="PDB" id="4TQQ">
    <property type="method" value="X-ray"/>
    <property type="resolution" value="2.50 A"/>
    <property type="chains" value="H=11-250"/>
</dbReference>
<dbReference type="PDB" id="4V9G">
    <property type="method" value="X-ray"/>
    <property type="resolution" value="7.78 A"/>
    <property type="chains" value="AH/BH=1-260"/>
</dbReference>
<dbReference type="PDB" id="5LSE">
    <property type="method" value="X-ray"/>
    <property type="resolution" value="2.50 A"/>
    <property type="chains" value="H=1-260"/>
</dbReference>
<dbReference type="PDB" id="5V33">
    <property type="method" value="X-ray"/>
    <property type="resolution" value="3.49 A"/>
    <property type="chains" value="H=11-250"/>
</dbReference>
<dbReference type="PDB" id="6Z02">
    <property type="method" value="X-ray"/>
    <property type="resolution" value="2.10 A"/>
    <property type="chains" value="H=10-250"/>
</dbReference>
<dbReference type="PDB" id="6Z1J">
    <property type="method" value="X-ray"/>
    <property type="resolution" value="2.10 A"/>
    <property type="chains" value="H=10-250"/>
</dbReference>
<dbReference type="PDB" id="6Z27">
    <property type="method" value="X-ray"/>
    <property type="resolution" value="2.10 A"/>
    <property type="chains" value="H=1-250"/>
</dbReference>
<dbReference type="PDB" id="7MH3">
    <property type="method" value="X-ray"/>
    <property type="resolution" value="2.30 A"/>
    <property type="chains" value="H=1-259"/>
</dbReference>
<dbReference type="PDB" id="7MH4">
    <property type="method" value="X-ray"/>
    <property type="resolution" value="2.48 A"/>
    <property type="chains" value="H=1-259"/>
</dbReference>
<dbReference type="PDB" id="7MH5">
    <property type="method" value="X-ray"/>
    <property type="resolution" value="2.85 A"/>
    <property type="chains" value="H=1-259"/>
</dbReference>
<dbReference type="PDB" id="7MH8">
    <property type="method" value="X-ray"/>
    <property type="resolution" value="2.75 A"/>
    <property type="chains" value="H=1-259"/>
</dbReference>
<dbReference type="PDB" id="7MH9">
    <property type="method" value="X-ray"/>
    <property type="resolution" value="3.10 A"/>
    <property type="chains" value="H=1-259"/>
</dbReference>
<dbReference type="PDB" id="7MHA">
    <property type="method" value="X-ray"/>
    <property type="resolution" value="2.79 A"/>
    <property type="chains" value="H=1-259"/>
</dbReference>
<dbReference type="PDB" id="7OD5">
    <property type="method" value="X-ray"/>
    <property type="resolution" value="2.10 A"/>
    <property type="chains" value="H=9-249"/>
</dbReference>
<dbReference type="PDB" id="7P0Q">
    <property type="method" value="X-ray"/>
    <property type="resolution" value="1.73 A"/>
    <property type="chains" value="H=9-249"/>
</dbReference>
<dbReference type="PDB" id="7P17">
    <property type="method" value="X-ray"/>
    <property type="resolution" value="2.22 A"/>
    <property type="chains" value="H=9-250"/>
</dbReference>
<dbReference type="PDB" id="7Q7F">
    <property type="method" value="X-ray"/>
    <property type="resolution" value="2.75 A"/>
    <property type="chains" value="H=10-250"/>
</dbReference>
<dbReference type="PDB" id="7Q7G">
    <property type="method" value="X-ray"/>
    <property type="resolution" value="2.69 A"/>
    <property type="chains" value="H=10-250"/>
</dbReference>
<dbReference type="PDB" id="7Q7H">
    <property type="method" value="X-ray"/>
    <property type="resolution" value="2.49 A"/>
    <property type="chains" value="H=10-250"/>
</dbReference>
<dbReference type="PDB" id="7Q7J">
    <property type="method" value="X-ray"/>
    <property type="resolution" value="2.69 A"/>
    <property type="chains" value="H=10-250"/>
</dbReference>
<dbReference type="PDB" id="7Q7M">
    <property type="method" value="X-ray"/>
    <property type="resolution" value="2.55 A"/>
    <property type="chains" value="H=10-250"/>
</dbReference>
<dbReference type="PDB" id="7Q7N">
    <property type="method" value="X-ray"/>
    <property type="resolution" value="2.87 A"/>
    <property type="chains" value="H=10-250"/>
</dbReference>
<dbReference type="PDB" id="7Q7O">
    <property type="method" value="X-ray"/>
    <property type="resolution" value="2.65 A"/>
    <property type="chains" value="H=10-250"/>
</dbReference>
<dbReference type="PDB" id="7Z8D">
    <property type="method" value="X-ray"/>
    <property type="resolution" value="2.14 A"/>
    <property type="chains" value="H=9-250"/>
</dbReference>
<dbReference type="PDB" id="8C3F">
    <property type="method" value="X-ray"/>
    <property type="resolution" value="2.60 A"/>
    <property type="chains" value="H=9-249"/>
</dbReference>
<dbReference type="PDB" id="8C5X">
    <property type="method" value="X-ray"/>
    <property type="resolution" value="2.60 A"/>
    <property type="chains" value="H=9-250"/>
</dbReference>
<dbReference type="PDB" id="8C6K">
    <property type="method" value="X-ray"/>
    <property type="resolution" value="2.86 A"/>
    <property type="chains" value="H=9-250"/>
</dbReference>
<dbReference type="PDB" id="8C7C">
    <property type="method" value="X-ray"/>
    <property type="resolution" value="2.60 A"/>
    <property type="chains" value="H=10-260"/>
</dbReference>
<dbReference type="PDB" id="8C87">
    <property type="method" value="X-ray"/>
    <property type="resolution" value="2.45 A"/>
    <property type="chains" value="H=10-260"/>
</dbReference>
<dbReference type="PDB" id="8C88">
    <property type="method" value="X-ray"/>
    <property type="resolution" value="2.75 A"/>
    <property type="chains" value="H=9-250"/>
</dbReference>
<dbReference type="PDB" id="8VTJ">
    <property type="method" value="X-ray"/>
    <property type="resolution" value="2.81 A"/>
    <property type="chains" value="H=1-260"/>
</dbReference>
<dbReference type="PDB" id="8VTK">
    <property type="method" value="X-ray"/>
    <property type="resolution" value="3.07 A"/>
    <property type="chains" value="H=11-250"/>
</dbReference>
<dbReference type="PDB" id="8VTL">
    <property type="method" value="X-ray"/>
    <property type="resolution" value="3.05 A"/>
    <property type="chains" value="H=11-250"/>
</dbReference>
<dbReference type="PDB" id="8VTM">
    <property type="method" value="X-ray"/>
    <property type="resolution" value="3.51 A"/>
    <property type="chains" value="H=11-250"/>
</dbReference>
<dbReference type="PDB" id="8VTN">
    <property type="method" value="X-ray"/>
    <property type="resolution" value="3.57 A"/>
    <property type="chains" value="H=11-250"/>
</dbReference>
<dbReference type="PDB" id="8VTO">
    <property type="method" value="X-ray"/>
    <property type="resolution" value="3.09 A"/>
    <property type="chains" value="H=11-250"/>
</dbReference>
<dbReference type="PDBsum" id="1AIG"/>
<dbReference type="PDBsum" id="1AIJ"/>
<dbReference type="PDBsum" id="1DS8"/>
<dbReference type="PDBsum" id="1DV3"/>
<dbReference type="PDBsum" id="1DV6"/>
<dbReference type="PDBsum" id="1E14"/>
<dbReference type="PDBsum" id="1E6D"/>
<dbReference type="PDBsum" id="1F6N"/>
<dbReference type="PDBsum" id="1FNP"/>
<dbReference type="PDBsum" id="1FNQ"/>
<dbReference type="PDBsum" id="1JGW"/>
<dbReference type="PDBsum" id="1JGX"/>
<dbReference type="PDBsum" id="1JGY"/>
<dbReference type="PDBsum" id="1JGZ"/>
<dbReference type="PDBsum" id="1JH0"/>
<dbReference type="PDBsum" id="1K6L"/>
<dbReference type="PDBsum" id="1K6N"/>
<dbReference type="PDBsum" id="1KBY"/>
<dbReference type="PDBsum" id="1L9B"/>
<dbReference type="PDBsum" id="1L9J"/>
<dbReference type="PDBsum" id="1M3X"/>
<dbReference type="PDBsum" id="1MPS"/>
<dbReference type="PDBsum" id="1OGV"/>
<dbReference type="PDBsum" id="1PCR"/>
<dbReference type="PDBsum" id="1PSS"/>
<dbReference type="PDBsum" id="1PST"/>
<dbReference type="PDBsum" id="1QOV"/>
<dbReference type="PDBsum" id="1RG5"/>
<dbReference type="PDBsum" id="1RGN"/>
<dbReference type="PDBsum" id="1RQK"/>
<dbReference type="PDBsum" id="1RVJ"/>
<dbReference type="PDBsum" id="1RY5"/>
<dbReference type="PDBsum" id="1RZH"/>
<dbReference type="PDBsum" id="1RZZ"/>
<dbReference type="PDBsum" id="1S00"/>
<dbReference type="PDBsum" id="1UMX"/>
<dbReference type="PDBsum" id="1YF6"/>
<dbReference type="PDBsum" id="1YST"/>
<dbReference type="PDBsum" id="1Z9J"/>
<dbReference type="PDBsum" id="1Z9K"/>
<dbReference type="PDBsum" id="2BNP"/>
<dbReference type="PDBsum" id="2BNS"/>
<dbReference type="PDBsum" id="2BOZ"/>
<dbReference type="PDBsum" id="2GMR"/>
<dbReference type="PDBsum" id="2GNU"/>
<dbReference type="PDBsum" id="2HG3"/>
<dbReference type="PDBsum" id="2HG9"/>
<dbReference type="PDBsum" id="2HH1"/>
<dbReference type="PDBsum" id="2HHK"/>
<dbReference type="PDBsum" id="2HIT"/>
<dbReference type="PDBsum" id="2HJ6"/>
<dbReference type="PDBsum" id="2J8C"/>
<dbReference type="PDBsum" id="2J8D"/>
<dbReference type="PDBsum" id="2JIY"/>
<dbReference type="PDBsum" id="2JJ0"/>
<dbReference type="PDBsum" id="2RCR"/>
<dbReference type="PDBsum" id="2UWS"/>
<dbReference type="PDBsum" id="2UWT"/>
<dbReference type="PDBsum" id="2UWU"/>
<dbReference type="PDBsum" id="2UWV"/>
<dbReference type="PDBsum" id="2UWW"/>
<dbReference type="PDBsum" id="2UX3"/>
<dbReference type="PDBsum" id="2UX4"/>
<dbReference type="PDBsum" id="2UX5"/>
<dbReference type="PDBsum" id="2UXJ"/>
<dbReference type="PDBsum" id="2UXK"/>
<dbReference type="PDBsum" id="2UXL"/>
<dbReference type="PDBsum" id="2UXM"/>
<dbReference type="PDBsum" id="3DSY"/>
<dbReference type="PDBsum" id="3DTA"/>
<dbReference type="PDBsum" id="3DTR"/>
<dbReference type="PDBsum" id="3DTS"/>
<dbReference type="PDBsum" id="3DU2"/>
<dbReference type="PDBsum" id="3DU3"/>
<dbReference type="PDBsum" id="3DUQ"/>
<dbReference type="PDBsum" id="3I4D"/>
<dbReference type="PDBsum" id="3V3Y"/>
<dbReference type="PDBsum" id="3V3Z"/>
<dbReference type="PDBsum" id="3ZUM"/>
<dbReference type="PDBsum" id="3ZUW"/>
<dbReference type="PDBsum" id="4H99"/>
<dbReference type="PDBsum" id="4H9L"/>
<dbReference type="PDBsum" id="4HBH"/>
<dbReference type="PDBsum" id="4HBJ"/>
<dbReference type="PDBsum" id="4IN7"/>
<dbReference type="PDBsum" id="4LWY"/>
<dbReference type="PDBsum" id="4N7K"/>
<dbReference type="PDBsum" id="4RCR"/>
<dbReference type="PDBsum" id="4TQQ"/>
<dbReference type="PDBsum" id="4V9G"/>
<dbReference type="PDBsum" id="5LSE"/>
<dbReference type="PDBsum" id="5V33"/>
<dbReference type="PDBsum" id="6Z02"/>
<dbReference type="PDBsum" id="6Z1J"/>
<dbReference type="PDBsum" id="6Z27"/>
<dbReference type="PDBsum" id="7MH3"/>
<dbReference type="PDBsum" id="7MH4"/>
<dbReference type="PDBsum" id="7MH5"/>
<dbReference type="PDBsum" id="7MH8"/>
<dbReference type="PDBsum" id="7MH9"/>
<dbReference type="PDBsum" id="7MHA"/>
<dbReference type="PDBsum" id="7OD5"/>
<dbReference type="PDBsum" id="7P0Q"/>
<dbReference type="PDBsum" id="7P17"/>
<dbReference type="PDBsum" id="7Q7F"/>
<dbReference type="PDBsum" id="7Q7G"/>
<dbReference type="PDBsum" id="7Q7H"/>
<dbReference type="PDBsum" id="7Q7J"/>
<dbReference type="PDBsum" id="7Q7M"/>
<dbReference type="PDBsum" id="7Q7N"/>
<dbReference type="PDBsum" id="7Q7O"/>
<dbReference type="PDBsum" id="7Z8D"/>
<dbReference type="PDBsum" id="8C3F"/>
<dbReference type="PDBsum" id="8C5X"/>
<dbReference type="PDBsum" id="8C6K"/>
<dbReference type="PDBsum" id="8C7C"/>
<dbReference type="PDBsum" id="8C87"/>
<dbReference type="PDBsum" id="8C88"/>
<dbReference type="PDBsum" id="8VTJ"/>
<dbReference type="PDBsum" id="8VTK"/>
<dbReference type="PDBsum" id="8VTL"/>
<dbReference type="PDBsum" id="8VTM"/>
<dbReference type="PDBsum" id="8VTN"/>
<dbReference type="PDBsum" id="8VTO"/>
<dbReference type="SMR" id="P0C0Y7"/>
<dbReference type="DIP" id="DIP-60491N"/>
<dbReference type="IntAct" id="P0C0Y7">
    <property type="interactions" value="2"/>
</dbReference>
<dbReference type="DrugBank" id="DB04147">
    <property type="generic name" value="Dodecyldimethylamine N-oxide"/>
</dbReference>
<dbReference type="DrugBank" id="DB08215">
    <property type="generic name" value="Terbutryn"/>
</dbReference>
<dbReference type="DrugBank" id="DB08690">
    <property type="generic name" value="Ubiquinone Q2"/>
</dbReference>
<dbReference type="TCDB" id="3.E.2.1.1">
    <property type="family name" value="the photosynthetic reaction center (prc) family"/>
</dbReference>
<dbReference type="GeneID" id="67447024"/>
<dbReference type="OMA" id="YAFWIFF"/>
<dbReference type="EvolutionaryTrace" id="P0C0Y7"/>
<dbReference type="GO" id="GO:0030077">
    <property type="term" value="C:plasma membrane light-harvesting complex"/>
    <property type="evidence" value="ECO:0007669"/>
    <property type="project" value="InterPro"/>
</dbReference>
<dbReference type="GO" id="GO:0042717">
    <property type="term" value="C:plasma membrane-derived chromatophore membrane"/>
    <property type="evidence" value="ECO:0007669"/>
    <property type="project" value="UniProtKB-SubCell"/>
</dbReference>
<dbReference type="GO" id="GO:0042314">
    <property type="term" value="F:bacteriochlorophyll binding"/>
    <property type="evidence" value="ECO:0007669"/>
    <property type="project" value="UniProtKB-KW"/>
</dbReference>
<dbReference type="GO" id="GO:0045156">
    <property type="term" value="F:electron transporter, transferring electrons within the cyclic electron transport pathway of photosynthesis activity"/>
    <property type="evidence" value="ECO:0007669"/>
    <property type="project" value="InterPro"/>
</dbReference>
<dbReference type="GO" id="GO:0019684">
    <property type="term" value="P:photosynthesis, light reaction"/>
    <property type="evidence" value="ECO:0007669"/>
    <property type="project" value="InterPro"/>
</dbReference>
<dbReference type="CDD" id="cd00226">
    <property type="entry name" value="PRCH"/>
    <property type="match status" value="1"/>
</dbReference>
<dbReference type="Gene3D" id="3.90.50.10">
    <property type="entry name" value="Photosynthetic Reaction Center, subunit H, domain 2"/>
    <property type="match status" value="1"/>
</dbReference>
<dbReference type="Gene3D" id="4.10.540.10">
    <property type="entry name" value="Photosynthetic reaction centre, H subunit, N-terminal domain"/>
    <property type="match status" value="1"/>
</dbReference>
<dbReference type="InterPro" id="IPR014747">
    <property type="entry name" value="Bac_photo_RC_H_C"/>
</dbReference>
<dbReference type="InterPro" id="IPR005652">
    <property type="entry name" value="Photo_RC_H"/>
</dbReference>
<dbReference type="InterPro" id="IPR015810">
    <property type="entry name" value="Photo_RC_H_N"/>
</dbReference>
<dbReference type="InterPro" id="IPR037097">
    <property type="entry name" value="Photo_RC_H_N_sf"/>
</dbReference>
<dbReference type="InterPro" id="IPR027275">
    <property type="entry name" value="PRC-brl_dom"/>
</dbReference>
<dbReference type="InterPro" id="IPR011033">
    <property type="entry name" value="PRC_barrel-like_sf"/>
</dbReference>
<dbReference type="NCBIfam" id="TIGR01150">
    <property type="entry name" value="puhA"/>
    <property type="match status" value="1"/>
</dbReference>
<dbReference type="Pfam" id="PF05239">
    <property type="entry name" value="PRC"/>
    <property type="match status" value="1"/>
</dbReference>
<dbReference type="Pfam" id="PF03967">
    <property type="entry name" value="PRCH"/>
    <property type="match status" value="1"/>
</dbReference>
<dbReference type="SUPFAM" id="SSF81490">
    <property type="entry name" value="Photosystem II reaction centre subunit H, transmembrane region"/>
    <property type="match status" value="1"/>
</dbReference>
<dbReference type="SUPFAM" id="SSF50346">
    <property type="entry name" value="PRC-barrel domain"/>
    <property type="match status" value="1"/>
</dbReference>
<accession>P0C0Y7</accession>
<accession>P11846</accession>
<accession>Q9RFD9</accession>
<organism>
    <name type="scientific">Cereibacter sphaeroides</name>
    <name type="common">Rhodobacter sphaeroides</name>
    <dbReference type="NCBI Taxonomy" id="1063"/>
    <lineage>
        <taxon>Bacteria</taxon>
        <taxon>Pseudomonadati</taxon>
        <taxon>Pseudomonadota</taxon>
        <taxon>Alphaproteobacteria</taxon>
        <taxon>Rhodobacterales</taxon>
        <taxon>Paracoccaceae</taxon>
        <taxon>Cereibacter</taxon>
    </lineage>
</organism>
<evidence type="ECO:0000305" key="1"/>
<evidence type="ECO:0007829" key="2">
    <source>
        <dbReference type="PDB" id="1FNP"/>
    </source>
</evidence>
<evidence type="ECO:0007829" key="3">
    <source>
        <dbReference type="PDB" id="1L9B"/>
    </source>
</evidence>
<evidence type="ECO:0007829" key="4">
    <source>
        <dbReference type="PDB" id="1PSS"/>
    </source>
</evidence>
<evidence type="ECO:0007829" key="5">
    <source>
        <dbReference type="PDB" id="1YST"/>
    </source>
</evidence>
<evidence type="ECO:0007829" key="6">
    <source>
        <dbReference type="PDB" id="2HG9"/>
    </source>
</evidence>
<evidence type="ECO:0007829" key="7">
    <source>
        <dbReference type="PDB" id="2J8D"/>
    </source>
</evidence>
<evidence type="ECO:0007829" key="8">
    <source>
        <dbReference type="PDB" id="2RCR"/>
    </source>
</evidence>
<evidence type="ECO:0007829" key="9">
    <source>
        <dbReference type="PDB" id="2UWU"/>
    </source>
</evidence>
<evidence type="ECO:0007829" key="10">
    <source>
        <dbReference type="PDB" id="4RCR"/>
    </source>
</evidence>
<evidence type="ECO:0007829" key="11">
    <source>
        <dbReference type="PDB" id="6Z1J"/>
    </source>
</evidence>
<evidence type="ECO:0007829" key="12">
    <source>
        <dbReference type="PDB" id="6Z27"/>
    </source>
</evidence>
<evidence type="ECO:0007829" key="13">
    <source>
        <dbReference type="PDB" id="7P0Q"/>
    </source>
</evidence>
<proteinExistence type="evidence at protein level"/>